<comment type="function">
    <text evidence="1">Involved in the third step of the chorismate pathway, which leads to the biosynthesis of aromatic amino acids. Catalyzes the cis-dehydration of 3-dehydroquinate (DHQ) and introduces the first double bond of the aromatic ring to yield 3-dehydroshikimate.</text>
</comment>
<comment type="catalytic activity">
    <reaction evidence="1">
        <text>3-dehydroquinate = 3-dehydroshikimate + H2O</text>
        <dbReference type="Rhea" id="RHEA:21096"/>
        <dbReference type="ChEBI" id="CHEBI:15377"/>
        <dbReference type="ChEBI" id="CHEBI:16630"/>
        <dbReference type="ChEBI" id="CHEBI:32364"/>
        <dbReference type="EC" id="4.2.1.10"/>
    </reaction>
</comment>
<comment type="pathway">
    <text evidence="1">Metabolic intermediate biosynthesis; chorismate biosynthesis; chorismate from D-erythrose 4-phosphate and phosphoenolpyruvate: step 3/7.</text>
</comment>
<comment type="subunit">
    <text evidence="1">Homodimer.</text>
</comment>
<comment type="similarity">
    <text evidence="1">Belongs to the type-I 3-dehydroquinase family.</text>
</comment>
<reference key="1">
    <citation type="journal article" date="2003" name="Proc. Natl. Acad. Sci. U.S.A.">
        <title>Complete genome sequence of the Q-fever pathogen, Coxiella burnetii.</title>
        <authorList>
            <person name="Seshadri R."/>
            <person name="Paulsen I.T."/>
            <person name="Eisen J.A."/>
            <person name="Read T.D."/>
            <person name="Nelson K.E."/>
            <person name="Nelson W.C."/>
            <person name="Ward N.L."/>
            <person name="Tettelin H."/>
            <person name="Davidsen T.M."/>
            <person name="Beanan M.J."/>
            <person name="DeBoy R.T."/>
            <person name="Daugherty S.C."/>
            <person name="Brinkac L.M."/>
            <person name="Madupu R."/>
            <person name="Dodson R.J."/>
            <person name="Khouri H.M."/>
            <person name="Lee K.H."/>
            <person name="Carty H.A."/>
            <person name="Scanlan D."/>
            <person name="Heinzen R.A."/>
            <person name="Thompson H.A."/>
            <person name="Samuel J.E."/>
            <person name="Fraser C.M."/>
            <person name="Heidelberg J.F."/>
        </authorList>
    </citation>
    <scope>NUCLEOTIDE SEQUENCE [LARGE SCALE GENOMIC DNA]</scope>
    <source>
        <strain>RSA 493 / Nine Mile phase I</strain>
    </source>
</reference>
<evidence type="ECO:0000255" key="1">
    <source>
        <dbReference type="HAMAP-Rule" id="MF_00214"/>
    </source>
</evidence>
<gene>
    <name evidence="1" type="primary">aroD</name>
    <name type="ordered locus">CBU_2075</name>
</gene>
<accession>Q83A36</accession>
<name>AROD_COXBU</name>
<dbReference type="EC" id="4.2.1.10" evidence="1"/>
<dbReference type="EMBL" id="AE016828">
    <property type="protein sequence ID" value="AAO91559.1"/>
    <property type="molecule type" value="Genomic_DNA"/>
</dbReference>
<dbReference type="RefSeq" id="NP_821045.1">
    <property type="nucleotide sequence ID" value="NC_002971.4"/>
</dbReference>
<dbReference type="RefSeq" id="WP_005772174.1">
    <property type="nucleotide sequence ID" value="NZ_CDBG01000001.1"/>
</dbReference>
<dbReference type="SMR" id="Q83A36"/>
<dbReference type="STRING" id="227377.CBU_2075"/>
<dbReference type="EnsemblBacteria" id="AAO91559">
    <property type="protein sequence ID" value="AAO91559"/>
    <property type="gene ID" value="CBU_2075"/>
</dbReference>
<dbReference type="GeneID" id="1209988"/>
<dbReference type="KEGG" id="cbu:CBU_2075"/>
<dbReference type="PATRIC" id="fig|227377.7.peg.2065"/>
<dbReference type="eggNOG" id="COG0710">
    <property type="taxonomic scope" value="Bacteria"/>
</dbReference>
<dbReference type="HOGENOM" id="CLU_064444_2_1_6"/>
<dbReference type="OrthoDB" id="9813659at2"/>
<dbReference type="UniPathway" id="UPA00053">
    <property type="reaction ID" value="UER00086"/>
</dbReference>
<dbReference type="Proteomes" id="UP000002671">
    <property type="component" value="Chromosome"/>
</dbReference>
<dbReference type="GO" id="GO:0003855">
    <property type="term" value="F:3-dehydroquinate dehydratase activity"/>
    <property type="evidence" value="ECO:0000318"/>
    <property type="project" value="GO_Central"/>
</dbReference>
<dbReference type="GO" id="GO:0046279">
    <property type="term" value="P:3,4-dihydroxybenzoate biosynthetic process"/>
    <property type="evidence" value="ECO:0000318"/>
    <property type="project" value="GO_Central"/>
</dbReference>
<dbReference type="GO" id="GO:0008652">
    <property type="term" value="P:amino acid biosynthetic process"/>
    <property type="evidence" value="ECO:0007669"/>
    <property type="project" value="UniProtKB-KW"/>
</dbReference>
<dbReference type="GO" id="GO:0009073">
    <property type="term" value="P:aromatic amino acid family biosynthetic process"/>
    <property type="evidence" value="ECO:0007669"/>
    <property type="project" value="UniProtKB-KW"/>
</dbReference>
<dbReference type="GO" id="GO:0009423">
    <property type="term" value="P:chorismate biosynthetic process"/>
    <property type="evidence" value="ECO:0007669"/>
    <property type="project" value="UniProtKB-UniRule"/>
</dbReference>
<dbReference type="CDD" id="cd00502">
    <property type="entry name" value="DHQase_I"/>
    <property type="match status" value="1"/>
</dbReference>
<dbReference type="FunFam" id="3.20.20.70:FF:000290">
    <property type="entry name" value="3-dehydroquinate dehydratase"/>
    <property type="match status" value="1"/>
</dbReference>
<dbReference type="Gene3D" id="3.20.20.70">
    <property type="entry name" value="Aldolase class I"/>
    <property type="match status" value="1"/>
</dbReference>
<dbReference type="HAMAP" id="MF_00214">
    <property type="entry name" value="AroD"/>
    <property type="match status" value="1"/>
</dbReference>
<dbReference type="InterPro" id="IPR013785">
    <property type="entry name" value="Aldolase_TIM"/>
</dbReference>
<dbReference type="InterPro" id="IPR001381">
    <property type="entry name" value="DHquinase_I"/>
</dbReference>
<dbReference type="InterPro" id="IPR050146">
    <property type="entry name" value="Type-I_3-dehydroquinase"/>
</dbReference>
<dbReference type="NCBIfam" id="TIGR01093">
    <property type="entry name" value="aroD"/>
    <property type="match status" value="1"/>
</dbReference>
<dbReference type="PANTHER" id="PTHR43699">
    <property type="entry name" value="3-DEHYDROQUINATE DEHYDRATASE"/>
    <property type="match status" value="1"/>
</dbReference>
<dbReference type="PANTHER" id="PTHR43699:SF1">
    <property type="entry name" value="3-DEHYDROQUINATE DEHYDRATASE"/>
    <property type="match status" value="1"/>
</dbReference>
<dbReference type="Pfam" id="PF01487">
    <property type="entry name" value="DHquinase_I"/>
    <property type="match status" value="1"/>
</dbReference>
<dbReference type="SUPFAM" id="SSF51569">
    <property type="entry name" value="Aldolase"/>
    <property type="match status" value="1"/>
</dbReference>
<keyword id="KW-0028">Amino-acid biosynthesis</keyword>
<keyword id="KW-0057">Aromatic amino acid biosynthesis</keyword>
<keyword id="KW-0456">Lyase</keyword>
<keyword id="KW-1185">Reference proteome</keyword>
<keyword id="KW-0704">Schiff base</keyword>
<organism>
    <name type="scientific">Coxiella burnetii (strain RSA 493 / Nine Mile phase I)</name>
    <dbReference type="NCBI Taxonomy" id="227377"/>
    <lineage>
        <taxon>Bacteria</taxon>
        <taxon>Pseudomonadati</taxon>
        <taxon>Pseudomonadota</taxon>
        <taxon>Gammaproteobacteria</taxon>
        <taxon>Legionellales</taxon>
        <taxon>Coxiellaceae</taxon>
        <taxon>Coxiella</taxon>
    </lineage>
</organism>
<protein>
    <recommendedName>
        <fullName evidence="1">3-dehydroquinate dehydratase</fullName>
        <shortName evidence="1">3-dehydroquinase</shortName>
        <ecNumber evidence="1">4.2.1.10</ecNumber>
    </recommendedName>
    <alternativeName>
        <fullName evidence="1">Type I DHQase</fullName>
    </alternativeName>
    <alternativeName>
        <fullName evidence="1">Type I dehydroquinase</fullName>
        <shortName evidence="1">DHQ1</shortName>
    </alternativeName>
</protein>
<feature type="chain" id="PRO_0000325521" description="3-dehydroquinate dehydratase">
    <location>
        <begin position="1"/>
        <end position="233"/>
    </location>
</feature>
<feature type="active site" description="Proton donor/acceptor" evidence="1">
    <location>
        <position position="118"/>
    </location>
</feature>
<feature type="active site" description="Schiff-base intermediate with substrate" evidence="1">
    <location>
        <position position="145"/>
    </location>
</feature>
<feature type="binding site" evidence="1">
    <location>
        <begin position="34"/>
        <end position="36"/>
    </location>
    <ligand>
        <name>3-dehydroquinate</name>
        <dbReference type="ChEBI" id="CHEBI:32364"/>
    </ligand>
</feature>
<feature type="binding site" evidence="1">
    <location>
        <position position="64"/>
    </location>
    <ligand>
        <name>3-dehydroquinate</name>
        <dbReference type="ChEBI" id="CHEBI:32364"/>
    </ligand>
</feature>
<feature type="binding site" evidence="1">
    <location>
        <position position="185"/>
    </location>
    <ligand>
        <name>3-dehydroquinate</name>
        <dbReference type="ChEBI" id="CHEBI:32364"/>
    </ligand>
</feature>
<feature type="binding site" evidence="1">
    <location>
        <position position="205"/>
    </location>
    <ligand>
        <name>3-dehydroquinate</name>
        <dbReference type="ChEBI" id="CHEBI:32364"/>
    </ligand>
</feature>
<feature type="binding site" evidence="1">
    <location>
        <position position="209"/>
    </location>
    <ligand>
        <name>3-dehydroquinate</name>
        <dbReference type="ChEBI" id="CHEBI:32364"/>
    </ligand>
</feature>
<sequence length="233" mass="26508">MLNTPRICVVVIGKTLEEFLSQLEAAQTAVDFVELRIDYLEQINPNWVRIIKNHTHKKAILCCRARADGGKFLGTPEAQQEILQAGNDLGFDYLDIDLPVANKISIHEKKAKIIISYHNFLHTPPITELNFLLENMRLFNPDVFKFATKSEQYEDVKTLFKLLINKKNNENMIVLGMGEQGKIIRLLSPLLGGYLTFSSINGAISAPGQIDFKTMQDFYQRFYKISSPLKGED</sequence>
<proteinExistence type="inferred from homology"/>